<sequence length="596" mass="66372">MRTHYCNGIHEGLIGQTVTLCGWAQRRRDHGGVIFIDLRDREGLVQIVADPDQVDAFAAANECRSEFVLQVEGVLRARPAGTENPHMPSGKVELAAARIRILNRSEPVPFPLDEEDIAENLRLKYRYLDLRRPEMLHRLRLRHQVTRFVRGYLDNAGFIDVETPVLTRSTPEGARDYLVPSRTQPGHFFALPQSPQLFKQLLMVAGLDRYYQITKCFRDEDLRADRQPEFTQIDIEASFVDEEAVMGTAEPMIRGLFAEVLGVQLPDPFPRMTYRDAMHRFGVDRPDLRNPLELTELTDLMRAVDFKVFREAAERPHGRVACLRVPGGAQLSRAQIDAYTQFTAIYGARGLAWIKVNALDQGNEGLQSPIVKFLPEMVLSEILRRSGAAAGDILFFGADTAKIVNEALGNLRNRVAADLGLLEGEWCPVWITDFPMFDYDDKEDRWTSTHHPFTAPQTEHLETLGQDPGNALARAYDLVLNGNEIGGGSIRIHQEAVQEKVFAALGIGAEEARDKFGFLLDALHYGAPPHGGLAFGLDRLVMLLCGAETIRDVIAFPKTQKAGCLLTEAPGTVADKQLQELGIRLRPGVGGGVPNP</sequence>
<protein>
    <recommendedName>
        <fullName evidence="1">Aspartate--tRNA(Asp/Asn) ligase</fullName>
        <ecNumber evidence="1">6.1.1.23</ecNumber>
    </recommendedName>
    <alternativeName>
        <fullName evidence="1">Aspartyl-tRNA synthetase</fullName>
        <shortName evidence="1">AspRS</shortName>
    </alternativeName>
    <alternativeName>
        <fullName evidence="1">Non-discriminating aspartyl-tRNA synthetase</fullName>
        <shortName evidence="1">ND-AspRS</shortName>
    </alternativeName>
</protein>
<evidence type="ECO:0000255" key="1">
    <source>
        <dbReference type="HAMAP-Rule" id="MF_00044"/>
    </source>
</evidence>
<gene>
    <name evidence="1" type="primary">aspS</name>
    <name type="ordered locus">AFE_0056</name>
</gene>
<reference key="1">
    <citation type="journal article" date="2008" name="BMC Genomics">
        <title>Acidithiobacillus ferrooxidans metabolism: from genome sequence to industrial applications.</title>
        <authorList>
            <person name="Valdes J."/>
            <person name="Pedroso I."/>
            <person name="Quatrini R."/>
            <person name="Dodson R.J."/>
            <person name="Tettelin H."/>
            <person name="Blake R. II"/>
            <person name="Eisen J.A."/>
            <person name="Holmes D.S."/>
        </authorList>
    </citation>
    <scope>NUCLEOTIDE SEQUENCE [LARGE SCALE GENOMIC DNA]</scope>
    <source>
        <strain>ATCC 23270 / DSM 14882 / CIP 104768 / NCIMB 8455</strain>
    </source>
</reference>
<accession>B7J3F7</accession>
<proteinExistence type="inferred from homology"/>
<feature type="chain" id="PRO_1000198944" description="Aspartate--tRNA(Asp/Asn) ligase">
    <location>
        <begin position="1"/>
        <end position="596"/>
    </location>
</feature>
<feature type="region of interest" description="Aspartate" evidence="1">
    <location>
        <begin position="196"/>
        <end position="199"/>
    </location>
</feature>
<feature type="binding site" evidence="1">
    <location>
        <position position="172"/>
    </location>
    <ligand>
        <name>L-aspartate</name>
        <dbReference type="ChEBI" id="CHEBI:29991"/>
    </ligand>
</feature>
<feature type="binding site" evidence="1">
    <location>
        <begin position="218"/>
        <end position="220"/>
    </location>
    <ligand>
        <name>ATP</name>
        <dbReference type="ChEBI" id="CHEBI:30616"/>
    </ligand>
</feature>
<feature type="binding site" evidence="1">
    <location>
        <position position="218"/>
    </location>
    <ligand>
        <name>L-aspartate</name>
        <dbReference type="ChEBI" id="CHEBI:29991"/>
    </ligand>
</feature>
<feature type="binding site" evidence="1">
    <location>
        <position position="227"/>
    </location>
    <ligand>
        <name>ATP</name>
        <dbReference type="ChEBI" id="CHEBI:30616"/>
    </ligand>
</feature>
<feature type="binding site" evidence="1">
    <location>
        <position position="450"/>
    </location>
    <ligand>
        <name>L-aspartate</name>
        <dbReference type="ChEBI" id="CHEBI:29991"/>
    </ligand>
</feature>
<feature type="binding site" evidence="1">
    <location>
        <position position="484"/>
    </location>
    <ligand>
        <name>ATP</name>
        <dbReference type="ChEBI" id="CHEBI:30616"/>
    </ligand>
</feature>
<feature type="binding site" evidence="1">
    <location>
        <position position="491"/>
    </location>
    <ligand>
        <name>L-aspartate</name>
        <dbReference type="ChEBI" id="CHEBI:29991"/>
    </ligand>
</feature>
<feature type="binding site" evidence="1">
    <location>
        <begin position="536"/>
        <end position="539"/>
    </location>
    <ligand>
        <name>ATP</name>
        <dbReference type="ChEBI" id="CHEBI:30616"/>
    </ligand>
</feature>
<feature type="site" description="Important for tRNA non-discrimination" evidence="1">
    <location>
        <position position="30"/>
    </location>
</feature>
<feature type="site" description="Important for tRNA non-discrimination" evidence="1">
    <location>
        <position position="81"/>
    </location>
</feature>
<organism>
    <name type="scientific">Acidithiobacillus ferrooxidans (strain ATCC 23270 / DSM 14882 / CIP 104768 / NCIMB 8455)</name>
    <name type="common">Ferrobacillus ferrooxidans (strain ATCC 23270)</name>
    <dbReference type="NCBI Taxonomy" id="243159"/>
    <lineage>
        <taxon>Bacteria</taxon>
        <taxon>Pseudomonadati</taxon>
        <taxon>Pseudomonadota</taxon>
        <taxon>Acidithiobacillia</taxon>
        <taxon>Acidithiobacillales</taxon>
        <taxon>Acidithiobacillaceae</taxon>
        <taxon>Acidithiobacillus</taxon>
    </lineage>
</organism>
<dbReference type="EC" id="6.1.1.23" evidence="1"/>
<dbReference type="EMBL" id="CP001219">
    <property type="protein sequence ID" value="ACK79763.1"/>
    <property type="molecule type" value="Genomic_DNA"/>
</dbReference>
<dbReference type="RefSeq" id="WP_012535765.1">
    <property type="nucleotide sequence ID" value="NC_011761.1"/>
</dbReference>
<dbReference type="SMR" id="B7J3F7"/>
<dbReference type="STRING" id="243159.AFE_0056"/>
<dbReference type="PaxDb" id="243159-AFE_0056"/>
<dbReference type="GeneID" id="65279455"/>
<dbReference type="KEGG" id="afr:AFE_0056"/>
<dbReference type="eggNOG" id="COG0173">
    <property type="taxonomic scope" value="Bacteria"/>
</dbReference>
<dbReference type="HOGENOM" id="CLU_014330_3_2_6"/>
<dbReference type="Proteomes" id="UP000001362">
    <property type="component" value="Chromosome"/>
</dbReference>
<dbReference type="GO" id="GO:0005737">
    <property type="term" value="C:cytoplasm"/>
    <property type="evidence" value="ECO:0007669"/>
    <property type="project" value="UniProtKB-SubCell"/>
</dbReference>
<dbReference type="GO" id="GO:0004815">
    <property type="term" value="F:aspartate-tRNA ligase activity"/>
    <property type="evidence" value="ECO:0007669"/>
    <property type="project" value="UniProtKB-UniRule"/>
</dbReference>
<dbReference type="GO" id="GO:0050560">
    <property type="term" value="F:aspartate-tRNA(Asn) ligase activity"/>
    <property type="evidence" value="ECO:0007669"/>
    <property type="project" value="UniProtKB-EC"/>
</dbReference>
<dbReference type="GO" id="GO:0005524">
    <property type="term" value="F:ATP binding"/>
    <property type="evidence" value="ECO:0007669"/>
    <property type="project" value="UniProtKB-UniRule"/>
</dbReference>
<dbReference type="GO" id="GO:0003676">
    <property type="term" value="F:nucleic acid binding"/>
    <property type="evidence" value="ECO:0007669"/>
    <property type="project" value="InterPro"/>
</dbReference>
<dbReference type="GO" id="GO:0006422">
    <property type="term" value="P:aspartyl-tRNA aminoacylation"/>
    <property type="evidence" value="ECO:0007669"/>
    <property type="project" value="UniProtKB-UniRule"/>
</dbReference>
<dbReference type="CDD" id="cd00777">
    <property type="entry name" value="AspRS_core"/>
    <property type="match status" value="1"/>
</dbReference>
<dbReference type="CDD" id="cd04317">
    <property type="entry name" value="EcAspRS_like_N"/>
    <property type="match status" value="1"/>
</dbReference>
<dbReference type="Gene3D" id="3.30.930.10">
    <property type="entry name" value="Bira Bifunctional Protein, Domain 2"/>
    <property type="match status" value="1"/>
</dbReference>
<dbReference type="Gene3D" id="3.30.1360.30">
    <property type="entry name" value="GAD-like domain"/>
    <property type="match status" value="1"/>
</dbReference>
<dbReference type="Gene3D" id="2.40.50.140">
    <property type="entry name" value="Nucleic acid-binding proteins"/>
    <property type="match status" value="1"/>
</dbReference>
<dbReference type="HAMAP" id="MF_00044">
    <property type="entry name" value="Asp_tRNA_synth_type1"/>
    <property type="match status" value="1"/>
</dbReference>
<dbReference type="InterPro" id="IPR004364">
    <property type="entry name" value="Aa-tRNA-synt_II"/>
</dbReference>
<dbReference type="InterPro" id="IPR006195">
    <property type="entry name" value="aa-tRNA-synth_II"/>
</dbReference>
<dbReference type="InterPro" id="IPR045864">
    <property type="entry name" value="aa-tRNA-synth_II/BPL/LPL"/>
</dbReference>
<dbReference type="InterPro" id="IPR004524">
    <property type="entry name" value="Asp-tRNA-ligase_1"/>
</dbReference>
<dbReference type="InterPro" id="IPR047089">
    <property type="entry name" value="Asp-tRNA-ligase_1_N"/>
</dbReference>
<dbReference type="InterPro" id="IPR002312">
    <property type="entry name" value="Asp/Asn-tRNA-synth_IIb"/>
</dbReference>
<dbReference type="InterPro" id="IPR047090">
    <property type="entry name" value="AspRS_core"/>
</dbReference>
<dbReference type="InterPro" id="IPR004115">
    <property type="entry name" value="GAD-like_sf"/>
</dbReference>
<dbReference type="InterPro" id="IPR029351">
    <property type="entry name" value="GAD_dom"/>
</dbReference>
<dbReference type="InterPro" id="IPR012340">
    <property type="entry name" value="NA-bd_OB-fold"/>
</dbReference>
<dbReference type="InterPro" id="IPR004365">
    <property type="entry name" value="NA-bd_OB_tRNA"/>
</dbReference>
<dbReference type="NCBIfam" id="TIGR00459">
    <property type="entry name" value="aspS_bact"/>
    <property type="match status" value="1"/>
</dbReference>
<dbReference type="NCBIfam" id="NF001750">
    <property type="entry name" value="PRK00476.1"/>
    <property type="match status" value="1"/>
</dbReference>
<dbReference type="PANTHER" id="PTHR22594:SF5">
    <property type="entry name" value="ASPARTATE--TRNA LIGASE, MITOCHONDRIAL"/>
    <property type="match status" value="1"/>
</dbReference>
<dbReference type="PANTHER" id="PTHR22594">
    <property type="entry name" value="ASPARTYL/LYSYL-TRNA SYNTHETASE"/>
    <property type="match status" value="1"/>
</dbReference>
<dbReference type="Pfam" id="PF02938">
    <property type="entry name" value="GAD"/>
    <property type="match status" value="1"/>
</dbReference>
<dbReference type="Pfam" id="PF00152">
    <property type="entry name" value="tRNA-synt_2"/>
    <property type="match status" value="1"/>
</dbReference>
<dbReference type="Pfam" id="PF01336">
    <property type="entry name" value="tRNA_anti-codon"/>
    <property type="match status" value="1"/>
</dbReference>
<dbReference type="PRINTS" id="PR01042">
    <property type="entry name" value="TRNASYNTHASP"/>
</dbReference>
<dbReference type="SUPFAM" id="SSF55681">
    <property type="entry name" value="Class II aaRS and biotin synthetases"/>
    <property type="match status" value="1"/>
</dbReference>
<dbReference type="SUPFAM" id="SSF55261">
    <property type="entry name" value="GAD domain-like"/>
    <property type="match status" value="1"/>
</dbReference>
<dbReference type="SUPFAM" id="SSF50249">
    <property type="entry name" value="Nucleic acid-binding proteins"/>
    <property type="match status" value="1"/>
</dbReference>
<dbReference type="PROSITE" id="PS50862">
    <property type="entry name" value="AA_TRNA_LIGASE_II"/>
    <property type="match status" value="1"/>
</dbReference>
<comment type="function">
    <text evidence="1">Aspartyl-tRNA synthetase with relaxed tRNA specificity since it is able to aspartylate not only its cognate tRNA(Asp) but also tRNA(Asn). Reaction proceeds in two steps: L-aspartate is first activated by ATP to form Asp-AMP and then transferred to the acceptor end of tRNA(Asp/Asn).</text>
</comment>
<comment type="catalytic activity">
    <reaction evidence="1">
        <text>tRNA(Asx) + L-aspartate + ATP = L-aspartyl-tRNA(Asx) + AMP + diphosphate</text>
        <dbReference type="Rhea" id="RHEA:18349"/>
        <dbReference type="Rhea" id="RHEA-COMP:9710"/>
        <dbReference type="Rhea" id="RHEA-COMP:9711"/>
        <dbReference type="ChEBI" id="CHEBI:29991"/>
        <dbReference type="ChEBI" id="CHEBI:30616"/>
        <dbReference type="ChEBI" id="CHEBI:33019"/>
        <dbReference type="ChEBI" id="CHEBI:78442"/>
        <dbReference type="ChEBI" id="CHEBI:78516"/>
        <dbReference type="ChEBI" id="CHEBI:456215"/>
        <dbReference type="EC" id="6.1.1.23"/>
    </reaction>
</comment>
<comment type="subunit">
    <text evidence="1">Homodimer.</text>
</comment>
<comment type="subcellular location">
    <subcellularLocation>
        <location evidence="1">Cytoplasm</location>
    </subcellularLocation>
</comment>
<comment type="similarity">
    <text evidence="1">Belongs to the class-II aminoacyl-tRNA synthetase family. Type 1 subfamily.</text>
</comment>
<name>SYDND_ACIF2</name>
<keyword id="KW-0030">Aminoacyl-tRNA synthetase</keyword>
<keyword id="KW-0067">ATP-binding</keyword>
<keyword id="KW-0963">Cytoplasm</keyword>
<keyword id="KW-0436">Ligase</keyword>
<keyword id="KW-0547">Nucleotide-binding</keyword>
<keyword id="KW-0648">Protein biosynthesis</keyword>
<keyword id="KW-1185">Reference proteome</keyword>